<evidence type="ECO:0000255" key="1"/>
<evidence type="ECO:0000255" key="2">
    <source>
        <dbReference type="PROSITE-ProRule" id="PRU00159"/>
    </source>
</evidence>
<evidence type="ECO:0000269" key="3">
    <source>
    </source>
</evidence>
<evidence type="ECO:0000269" key="4">
    <source>
    </source>
</evidence>
<evidence type="ECO:0000269" key="5">
    <source>
    </source>
</evidence>
<evidence type="ECO:0000269" key="6">
    <source>
    </source>
</evidence>
<evidence type="ECO:0000269" key="7">
    <source>
    </source>
</evidence>
<evidence type="ECO:0000269" key="8">
    <source>
    </source>
</evidence>
<evidence type="ECO:0000303" key="9">
    <source>
    </source>
</evidence>
<evidence type="ECO:0000303" key="10">
    <source>
    </source>
</evidence>
<evidence type="ECO:0000303" key="11">
    <source>
    </source>
</evidence>
<evidence type="ECO:0000305" key="12"/>
<evidence type="ECO:0000312" key="13">
    <source>
        <dbReference type="Araport" id="AT1G79600"/>
    </source>
</evidence>
<evidence type="ECO:0000312" key="14">
    <source>
        <dbReference type="EMBL" id="AAF68128.1"/>
    </source>
</evidence>
<dbReference type="EC" id="2.7.-.-" evidence="2"/>
<dbReference type="EC" id="2.7.11.1" evidence="5"/>
<dbReference type="EMBL" id="AC010793">
    <property type="protein sequence ID" value="AAF68128.1"/>
    <property type="molecule type" value="Genomic_DNA"/>
</dbReference>
<dbReference type="EMBL" id="CP002684">
    <property type="protein sequence ID" value="AEE36271.1"/>
    <property type="molecule type" value="Genomic_DNA"/>
</dbReference>
<dbReference type="EMBL" id="AY141992">
    <property type="protein sequence ID" value="AAM98256.1"/>
    <property type="molecule type" value="mRNA"/>
</dbReference>
<dbReference type="EMBL" id="AY064971">
    <property type="protein sequence ID" value="AAL57626.1"/>
    <property type="molecule type" value="mRNA"/>
</dbReference>
<dbReference type="EMBL" id="AY039869">
    <property type="protein sequence ID" value="AAK63973.1"/>
    <property type="molecule type" value="mRNA"/>
</dbReference>
<dbReference type="RefSeq" id="NP_565214.1">
    <molecule id="Q9MA15-1"/>
    <property type="nucleotide sequence ID" value="NM_106608.4"/>
</dbReference>
<dbReference type="SMR" id="Q9MA15"/>
<dbReference type="FunCoup" id="Q9MA15">
    <property type="interactions" value="325"/>
</dbReference>
<dbReference type="STRING" id="3702.Q9MA15"/>
<dbReference type="PaxDb" id="3702-AT1G79600.1"/>
<dbReference type="ProteomicsDB" id="243299">
    <molecule id="Q9MA15-1"/>
</dbReference>
<dbReference type="EnsemblPlants" id="AT1G79600.1">
    <molecule id="Q9MA15-1"/>
    <property type="protein sequence ID" value="AT1G79600.1"/>
    <property type="gene ID" value="AT1G79600"/>
</dbReference>
<dbReference type="GeneID" id="844298"/>
<dbReference type="Gramene" id="AT1G79600.1">
    <molecule id="Q9MA15-1"/>
    <property type="protein sequence ID" value="AT1G79600.1"/>
    <property type="gene ID" value="AT1G79600"/>
</dbReference>
<dbReference type="KEGG" id="ath:AT1G79600"/>
<dbReference type="Araport" id="AT1G79600"/>
<dbReference type="TAIR" id="AT1G79600">
    <property type="gene designation" value="ABC1K3"/>
</dbReference>
<dbReference type="eggNOG" id="KOG1235">
    <property type="taxonomic scope" value="Eukaryota"/>
</dbReference>
<dbReference type="HOGENOM" id="CLU_006533_4_1_1"/>
<dbReference type="InParanoid" id="Q9MA15"/>
<dbReference type="OMA" id="GVMYKFP"/>
<dbReference type="OrthoDB" id="427480at2759"/>
<dbReference type="PhylomeDB" id="Q9MA15"/>
<dbReference type="PRO" id="PR:Q9MA15"/>
<dbReference type="Proteomes" id="UP000006548">
    <property type="component" value="Chromosome 1"/>
</dbReference>
<dbReference type="ExpressionAtlas" id="Q9MA15">
    <property type="expression patterns" value="baseline and differential"/>
</dbReference>
<dbReference type="GO" id="GO:0009507">
    <property type="term" value="C:chloroplast"/>
    <property type="evidence" value="ECO:0000314"/>
    <property type="project" value="UniProtKB"/>
</dbReference>
<dbReference type="GO" id="GO:0005739">
    <property type="term" value="C:mitochondrion"/>
    <property type="evidence" value="ECO:0007005"/>
    <property type="project" value="TAIR"/>
</dbReference>
<dbReference type="GO" id="GO:0010287">
    <property type="term" value="C:plastoglobule"/>
    <property type="evidence" value="ECO:0000314"/>
    <property type="project" value="TAIR"/>
</dbReference>
<dbReference type="GO" id="GO:0005524">
    <property type="term" value="F:ATP binding"/>
    <property type="evidence" value="ECO:0007669"/>
    <property type="project" value="UniProtKB-KW"/>
</dbReference>
<dbReference type="GO" id="GO:0004672">
    <property type="term" value="F:protein kinase activity"/>
    <property type="evidence" value="ECO:0000314"/>
    <property type="project" value="TAIR"/>
</dbReference>
<dbReference type="GO" id="GO:0106310">
    <property type="term" value="F:protein serine kinase activity"/>
    <property type="evidence" value="ECO:0007669"/>
    <property type="project" value="RHEA"/>
</dbReference>
<dbReference type="GO" id="GO:0004674">
    <property type="term" value="F:protein serine/threonine kinase activity"/>
    <property type="evidence" value="ECO:0007669"/>
    <property type="project" value="UniProtKB-EC"/>
</dbReference>
<dbReference type="GO" id="GO:0006995">
    <property type="term" value="P:cellular response to nitrogen starvation"/>
    <property type="evidence" value="ECO:0000315"/>
    <property type="project" value="UniProtKB"/>
</dbReference>
<dbReference type="GO" id="GO:0009658">
    <property type="term" value="P:chloroplast organization"/>
    <property type="evidence" value="ECO:0000315"/>
    <property type="project" value="UniProtKB"/>
</dbReference>
<dbReference type="GO" id="GO:0080177">
    <property type="term" value="P:plastoglobule organization"/>
    <property type="evidence" value="ECO:0000315"/>
    <property type="project" value="UniProtKB"/>
</dbReference>
<dbReference type="GO" id="GO:0050821">
    <property type="term" value="P:protein stabilization"/>
    <property type="evidence" value="ECO:0000315"/>
    <property type="project" value="TAIR"/>
</dbReference>
<dbReference type="GO" id="GO:1902171">
    <property type="term" value="P:regulation of tocopherol cyclase activity"/>
    <property type="evidence" value="ECO:0000315"/>
    <property type="project" value="TAIR"/>
</dbReference>
<dbReference type="GO" id="GO:0009644">
    <property type="term" value="P:response to high light intensity"/>
    <property type="evidence" value="ECO:0000315"/>
    <property type="project" value="UniProtKB"/>
</dbReference>
<dbReference type="GO" id="GO:0080183">
    <property type="term" value="P:response to photooxidative stress"/>
    <property type="evidence" value="ECO:0000315"/>
    <property type="project" value="UniProtKB"/>
</dbReference>
<dbReference type="GO" id="GO:0010114">
    <property type="term" value="P:response to red light"/>
    <property type="evidence" value="ECO:0000315"/>
    <property type="project" value="UniProtKB"/>
</dbReference>
<dbReference type="GO" id="GO:0009414">
    <property type="term" value="P:response to water deprivation"/>
    <property type="evidence" value="ECO:0000315"/>
    <property type="project" value="UniProtKB"/>
</dbReference>
<dbReference type="CDD" id="cd05121">
    <property type="entry name" value="ABC1_ADCK3-like"/>
    <property type="match status" value="1"/>
</dbReference>
<dbReference type="Gene3D" id="1.10.510.10">
    <property type="entry name" value="Transferase(Phosphotransferase) domain 1"/>
    <property type="match status" value="1"/>
</dbReference>
<dbReference type="InterPro" id="IPR004147">
    <property type="entry name" value="ABC1_dom"/>
</dbReference>
<dbReference type="InterPro" id="IPR016024">
    <property type="entry name" value="ARM-type_fold"/>
</dbReference>
<dbReference type="InterPro" id="IPR011009">
    <property type="entry name" value="Kinase-like_dom_sf"/>
</dbReference>
<dbReference type="InterPro" id="IPR000719">
    <property type="entry name" value="Prot_kinase_dom"/>
</dbReference>
<dbReference type="InterPro" id="IPR050154">
    <property type="entry name" value="UbiB_kinase"/>
</dbReference>
<dbReference type="PANTHER" id="PTHR10566">
    <property type="entry name" value="CHAPERONE-ACTIVITY OF BC1 COMPLEX CABC1 -RELATED"/>
    <property type="match status" value="1"/>
</dbReference>
<dbReference type="PANTHER" id="PTHR10566:SF120">
    <property type="entry name" value="PROTEIN ACTIVITY OF BC1 COMPLEX KINASE 3, CHLOROPLASTIC"/>
    <property type="match status" value="1"/>
</dbReference>
<dbReference type="Pfam" id="PF03109">
    <property type="entry name" value="ABC1"/>
    <property type="match status" value="1"/>
</dbReference>
<dbReference type="SUPFAM" id="SSF48371">
    <property type="entry name" value="ARM repeat"/>
    <property type="match status" value="1"/>
</dbReference>
<dbReference type="SUPFAM" id="SSF56112">
    <property type="entry name" value="Protein kinase-like (PK-like)"/>
    <property type="match status" value="1"/>
</dbReference>
<dbReference type="PROSITE" id="PS50011">
    <property type="entry name" value="PROTEIN_KINASE_DOM"/>
    <property type="match status" value="1"/>
</dbReference>
<sequence length="711" mass="79022">MSLVVGQSLGLTLVGDGLSLRNSKINVGKSKFFSVNRRRLARAALVQARPKEDGAAASPSPSSRPASVVQYRRADLADDLQAEARALGRAIDASIYSPELIARKHGSQPFKALRRSLEILGALGGFALKLGIDQKQGNLEKNMKKRAIELRRIFTRLGPTFVKLGQGLSTRPDLCPPDYLEELAELQDALPTFPDAEAFACIERELDLSLETIFSSVSPEPIAAASLGQVYKAQLRYSGQVVAVKVQRPGIEEAIGLDFYLIRGVGKLINKYVDFITTDVLTLIDEFACRVYQELNYVQEAQNARRFKKLYADKADVLVPDIFWDYTSRKVLTMEWVEGTKLNEQLAIESQGLKVLDLVNTGIQCSLRQLLEYGFFHADPHPGNLLATPDGKLAFLDFGMMSETPEEARFAIIGHVVHLVNRDYEAMARDYYALKFLSPDVDVTPIIPALRDFFDDALNYTVSELNFKTLVDGLGAVFYQYPFNVPPYYALILRSLTVLEGLALYADPNFKVLAASYPYFAKRLLTDPNPYLRDALIELLFKDGKFRWNRLENLLQQGSKDRDFSAKDALQPVLKLLLDPNGEELRLLVIKEAVRVSEAIALGTVVDTYNSLPEFLRSLVFNGNGNGPLTMSTAELQSTLELRDQVSRIWGLLQSSESFDPAILQPILQVLQQPEARRLGGRVAGGVGQRLAARFLQQLLRATTPSSAPSP</sequence>
<name>AB1K3_ARATH</name>
<proteinExistence type="evidence at protein level"/>
<organism>
    <name type="scientific">Arabidopsis thaliana</name>
    <name type="common">Mouse-ear cress</name>
    <dbReference type="NCBI Taxonomy" id="3702"/>
    <lineage>
        <taxon>Eukaryota</taxon>
        <taxon>Viridiplantae</taxon>
        <taxon>Streptophyta</taxon>
        <taxon>Embryophyta</taxon>
        <taxon>Tracheophyta</taxon>
        <taxon>Spermatophyta</taxon>
        <taxon>Magnoliopsida</taxon>
        <taxon>eudicotyledons</taxon>
        <taxon>Gunneridae</taxon>
        <taxon>Pentapetalae</taxon>
        <taxon>rosids</taxon>
        <taxon>malvids</taxon>
        <taxon>Brassicales</taxon>
        <taxon>Brassicaceae</taxon>
        <taxon>Camelineae</taxon>
        <taxon>Arabidopsis</taxon>
    </lineage>
</organism>
<comment type="function">
    <text evidence="5 6 7">Kinase that can phosphorylate the tocopherol cyclase VTE1, a key enzyme of tocopherol (vitamin E) metabolism and involved in the recycling of oxidated alpha-tocopherol quinone, possibly stabilizing it at plastoglobules. Also regulates membrane prenylquinone composition (PubMed:23632854). Required for photooxidative stress responses to prevent photosystem II core and chlorophyll degradations. Together with ABC1K1, contributes to plastoglobule (PG) function in prenyl-lipid metabolism, stress response, and thylakoid remodeling (PubMed:23632854, PubMed:23673981). Promotes photodamage of chloroplasts under continuous red light, thus working in opposition to ABC1K1 (PubMed:25882344).</text>
</comment>
<comment type="catalytic activity">
    <reaction evidence="5">
        <text>L-seryl-[protein] + ATP = O-phospho-L-seryl-[protein] + ADP + H(+)</text>
        <dbReference type="Rhea" id="RHEA:17989"/>
        <dbReference type="Rhea" id="RHEA-COMP:9863"/>
        <dbReference type="Rhea" id="RHEA-COMP:11604"/>
        <dbReference type="ChEBI" id="CHEBI:15378"/>
        <dbReference type="ChEBI" id="CHEBI:29999"/>
        <dbReference type="ChEBI" id="CHEBI:30616"/>
        <dbReference type="ChEBI" id="CHEBI:83421"/>
        <dbReference type="ChEBI" id="CHEBI:456216"/>
        <dbReference type="EC" id="2.7.11.1"/>
    </reaction>
</comment>
<comment type="catalytic activity">
    <reaction evidence="5">
        <text>L-threonyl-[protein] + ATP = O-phospho-L-threonyl-[protein] + ADP + H(+)</text>
        <dbReference type="Rhea" id="RHEA:46608"/>
        <dbReference type="Rhea" id="RHEA-COMP:11060"/>
        <dbReference type="Rhea" id="RHEA-COMP:11605"/>
        <dbReference type="ChEBI" id="CHEBI:15378"/>
        <dbReference type="ChEBI" id="CHEBI:30013"/>
        <dbReference type="ChEBI" id="CHEBI:30616"/>
        <dbReference type="ChEBI" id="CHEBI:61977"/>
        <dbReference type="ChEBI" id="CHEBI:456216"/>
        <dbReference type="EC" id="2.7.11.1"/>
    </reaction>
</comment>
<comment type="subunit">
    <text evidence="6 8">Interacts with ABC1K1 in plastoglobules (PG) (PubMed:23673981). Interacts with PGM48 (PubMed:27895226).</text>
</comment>
<comment type="subcellular location">
    <subcellularLocation>
        <location evidence="3 4">Plastid</location>
        <location evidence="3 4">Chloroplast</location>
        <location evidence="3 4">Plastoglobule</location>
    </subcellularLocation>
    <subcellularLocation>
        <location evidence="7">Plastid</location>
        <location evidence="7">Chloroplast</location>
    </subcellularLocation>
    <text evidence="7">Colocalizes with the chlorophyll autofluorescence of mature chloroplasts. In cotyledons of seedlings grown in continuous red light, only observed in the chloroplasts losing chlorophyll autofluorescence.</text>
</comment>
<comment type="alternative products">
    <event type="alternative splicing"/>
    <isoform>
        <id>Q9MA15-1</id>
        <name>1</name>
        <sequence type="displayed"/>
    </isoform>
    <isoform>
        <id>Q9MA15-2</id>
        <name>2</name>
        <sequence type="described" ref="VSP_025067"/>
    </isoform>
</comment>
<comment type="disruption phenotype">
    <text evidence="5 6 7">Suppression of the bleaching and dwarf phenotypes of plants lacking ABC1K1 in red light, associated with the rescue of chlorophylls and carotenoid contents as well as D1 protein level, product of psbA, one of the four core subunits of the photosystem II (PSII) (PubMed:25882344). Slight reduction of nonphotochemical quenching after high light intensity treatment. Abnormal chloroplast ultrastructure with slightly scattered thylakoid grana and reduced starch granules accumulation in normal light. In high light (HL), stronger phenotype with large scattered grana and extensive vacuolation as well as an increase in plastoglobule size and higher number of plastoglobule clusters, but no starch granule (PubMed:23632854). Impaired for the production of plastochromanol-8 (a plastoquinone-derived lipid antioxidant) and the redox recycling of alpha-tocopherol, but normal tocopherol. Increased accumulation of VTE1 and PAP1/FBN1a transcripts, but reduced levels of proteins fibrillin-1a (PAP1/FBN1a) and tocopherol cyclase (VTE1) due to protein instability and leading to abnormal accumulation of the alpha-tocopherol (alpha-T) oxidative- derivate alpha-tocopherol quinone (alpha-TQ) (PubMed:23632854). Conditional light stress phenotype in the double mutant abc1k1 abc1k3 that displays rapid chlorosis upon high light stress and slower, but irreversible, senescence-like phenotype during moderate light stress, drought or nitrogen limitation, but not cold stress. This senescence-like phenotype is associated with the degradation of the photosystem II core and up-regulation of chlorophyll degradation. During light stress, modified prenyl-lipid composition in plastoglobules (PG) probably due to reduced VTE1 activity and loss of CCD4, as well as abnormal recruitment of plastid jasmonate biosynthesis enzymes in PG (PubMed:23673981).</text>
</comment>
<comment type="similarity">
    <text evidence="12">Belongs to the protein kinase superfamily. ADCK protein kinase family.</text>
</comment>
<accession>Q9MA15</accession>
<accession>Q94BV0</accession>
<protein>
    <recommendedName>
        <fullName evidence="10">Protein ACTIVITY OF BC1 COMPLEX KINASE 3, chloroplastic</fullName>
        <shortName evidence="10">ABC1-LIKE KINASE 3</shortName>
        <ecNumber evidence="2">2.7.-.-</ecNumber>
        <ecNumber evidence="5">2.7.11.1</ecNumber>
    </recommendedName>
    <alternativeName>
        <fullName evidence="11">Protein REPRESSOR OF BDR1</fullName>
    </alternativeName>
</protein>
<gene>
    <name evidence="10" type="primary">ABC1K3</name>
    <name evidence="11" type="synonym">RBD1</name>
    <name evidence="13" type="ordered locus">At1g79600</name>
    <name evidence="14" type="ORF">F20B17.3</name>
</gene>
<keyword id="KW-0025">Alternative splicing</keyword>
<keyword id="KW-0067">ATP-binding</keyword>
<keyword id="KW-0150">Chloroplast</keyword>
<keyword id="KW-0418">Kinase</keyword>
<keyword id="KW-0547">Nucleotide-binding</keyword>
<keyword id="KW-0934">Plastid</keyword>
<keyword id="KW-1185">Reference proteome</keyword>
<keyword id="KW-0346">Stress response</keyword>
<keyword id="KW-0808">Transferase</keyword>
<keyword id="KW-0809">Transit peptide</keyword>
<reference key="1">
    <citation type="journal article" date="2000" name="Nature">
        <title>Sequence and analysis of chromosome 1 of the plant Arabidopsis thaliana.</title>
        <authorList>
            <person name="Theologis A."/>
            <person name="Ecker J.R."/>
            <person name="Palm C.J."/>
            <person name="Federspiel N.A."/>
            <person name="Kaul S."/>
            <person name="White O."/>
            <person name="Alonso J."/>
            <person name="Altafi H."/>
            <person name="Araujo R."/>
            <person name="Bowman C.L."/>
            <person name="Brooks S.Y."/>
            <person name="Buehler E."/>
            <person name="Chan A."/>
            <person name="Chao Q."/>
            <person name="Chen H."/>
            <person name="Cheuk R.F."/>
            <person name="Chin C.W."/>
            <person name="Chung M.K."/>
            <person name="Conn L."/>
            <person name="Conway A.B."/>
            <person name="Conway A.R."/>
            <person name="Creasy T.H."/>
            <person name="Dewar K."/>
            <person name="Dunn P."/>
            <person name="Etgu P."/>
            <person name="Feldblyum T.V."/>
            <person name="Feng J.-D."/>
            <person name="Fong B."/>
            <person name="Fujii C.Y."/>
            <person name="Gill J.E."/>
            <person name="Goldsmith A.D."/>
            <person name="Haas B."/>
            <person name="Hansen N.F."/>
            <person name="Hughes B."/>
            <person name="Huizar L."/>
            <person name="Hunter J.L."/>
            <person name="Jenkins J."/>
            <person name="Johnson-Hopson C."/>
            <person name="Khan S."/>
            <person name="Khaykin E."/>
            <person name="Kim C.J."/>
            <person name="Koo H.L."/>
            <person name="Kremenetskaia I."/>
            <person name="Kurtz D.B."/>
            <person name="Kwan A."/>
            <person name="Lam B."/>
            <person name="Langin-Hooper S."/>
            <person name="Lee A."/>
            <person name="Lee J.M."/>
            <person name="Lenz C.A."/>
            <person name="Li J.H."/>
            <person name="Li Y.-P."/>
            <person name="Lin X."/>
            <person name="Liu S.X."/>
            <person name="Liu Z.A."/>
            <person name="Luros J.S."/>
            <person name="Maiti R."/>
            <person name="Marziali A."/>
            <person name="Militscher J."/>
            <person name="Miranda M."/>
            <person name="Nguyen M."/>
            <person name="Nierman W.C."/>
            <person name="Osborne B.I."/>
            <person name="Pai G."/>
            <person name="Peterson J."/>
            <person name="Pham P.K."/>
            <person name="Rizzo M."/>
            <person name="Rooney T."/>
            <person name="Rowley D."/>
            <person name="Sakano H."/>
            <person name="Salzberg S.L."/>
            <person name="Schwartz J.R."/>
            <person name="Shinn P."/>
            <person name="Southwick A.M."/>
            <person name="Sun H."/>
            <person name="Tallon L.J."/>
            <person name="Tambunga G."/>
            <person name="Toriumi M.J."/>
            <person name="Town C.D."/>
            <person name="Utterback T."/>
            <person name="Van Aken S."/>
            <person name="Vaysberg M."/>
            <person name="Vysotskaia V.S."/>
            <person name="Walker M."/>
            <person name="Wu D."/>
            <person name="Yu G."/>
            <person name="Fraser C.M."/>
            <person name="Venter J.C."/>
            <person name="Davis R.W."/>
        </authorList>
    </citation>
    <scope>NUCLEOTIDE SEQUENCE [LARGE SCALE GENOMIC DNA]</scope>
    <source>
        <strain>cv. Columbia</strain>
    </source>
</reference>
<reference key="2">
    <citation type="journal article" date="2017" name="Plant J.">
        <title>Araport11: a complete reannotation of the Arabidopsis thaliana reference genome.</title>
        <authorList>
            <person name="Cheng C.Y."/>
            <person name="Krishnakumar V."/>
            <person name="Chan A.P."/>
            <person name="Thibaud-Nissen F."/>
            <person name="Schobel S."/>
            <person name="Town C.D."/>
        </authorList>
    </citation>
    <scope>GENOME REANNOTATION</scope>
    <source>
        <strain>cv. Columbia</strain>
    </source>
</reference>
<reference key="3">
    <citation type="journal article" date="2003" name="Science">
        <title>Empirical analysis of transcriptional activity in the Arabidopsis genome.</title>
        <authorList>
            <person name="Yamada K."/>
            <person name="Lim J."/>
            <person name="Dale J.M."/>
            <person name="Chen H."/>
            <person name="Shinn P."/>
            <person name="Palm C.J."/>
            <person name="Southwick A.M."/>
            <person name="Wu H.C."/>
            <person name="Kim C.J."/>
            <person name="Nguyen M."/>
            <person name="Pham P.K."/>
            <person name="Cheuk R.F."/>
            <person name="Karlin-Newmann G."/>
            <person name="Liu S.X."/>
            <person name="Lam B."/>
            <person name="Sakano H."/>
            <person name="Wu T."/>
            <person name="Yu G."/>
            <person name="Miranda M."/>
            <person name="Quach H.L."/>
            <person name="Tripp M."/>
            <person name="Chang C.H."/>
            <person name="Lee J.M."/>
            <person name="Toriumi M.J."/>
            <person name="Chan M.M."/>
            <person name="Tang C.C."/>
            <person name="Onodera C.S."/>
            <person name="Deng J.M."/>
            <person name="Akiyama K."/>
            <person name="Ansari Y."/>
            <person name="Arakawa T."/>
            <person name="Banh J."/>
            <person name="Banno F."/>
            <person name="Bowser L."/>
            <person name="Brooks S.Y."/>
            <person name="Carninci P."/>
            <person name="Chao Q."/>
            <person name="Choy N."/>
            <person name="Enju A."/>
            <person name="Goldsmith A.D."/>
            <person name="Gurjal M."/>
            <person name="Hansen N.F."/>
            <person name="Hayashizaki Y."/>
            <person name="Johnson-Hopson C."/>
            <person name="Hsuan V.W."/>
            <person name="Iida K."/>
            <person name="Karnes M."/>
            <person name="Khan S."/>
            <person name="Koesema E."/>
            <person name="Ishida J."/>
            <person name="Jiang P.X."/>
            <person name="Jones T."/>
            <person name="Kawai J."/>
            <person name="Kamiya A."/>
            <person name="Meyers C."/>
            <person name="Nakajima M."/>
            <person name="Narusaka M."/>
            <person name="Seki M."/>
            <person name="Sakurai T."/>
            <person name="Satou M."/>
            <person name="Tamse R."/>
            <person name="Vaysberg M."/>
            <person name="Wallender E.K."/>
            <person name="Wong C."/>
            <person name="Yamamura Y."/>
            <person name="Yuan S."/>
            <person name="Shinozaki K."/>
            <person name="Davis R.W."/>
            <person name="Theologis A."/>
            <person name="Ecker J.R."/>
        </authorList>
    </citation>
    <scope>NUCLEOTIDE SEQUENCE [LARGE SCALE MRNA] (ISOFORMS 1 AND 2)</scope>
    <source>
        <strain>cv. Columbia</strain>
    </source>
</reference>
<reference key="4">
    <citation type="journal article" date="2006" name="Plant Physiol.">
        <title>Protein profiling of plastoglobules in chloroplasts and chromoplasts. A surprising site for differential accumulation of metabolic enzymes.</title>
        <authorList>
            <person name="Ytterberg A.J."/>
            <person name="Peltier J.-B."/>
            <person name="van Wijk K.J."/>
        </authorList>
    </citation>
    <scope>IDENTIFICATION BY MASS SPECTROMETRY</scope>
    <scope>SUBCELLULAR LOCATION [LARGE SCALE ANALYSIS]</scope>
    <source>
        <strain>cv. Columbia</strain>
    </source>
</reference>
<reference key="5">
    <citation type="journal article" date="2012" name="Plant Physiol.">
        <title>The functional network of the Arabidopsis plastoglobule proteome based on quantitative proteomics and genome-wide coexpression analysis.</title>
        <authorList>
            <person name="Lundquist P.K."/>
            <person name="Poliakov A."/>
            <person name="Bhuiyan N.H."/>
            <person name="Zybailov B."/>
            <person name="Sun Q."/>
            <person name="van Wijk K.J."/>
        </authorList>
    </citation>
    <scope>IDENTIFICATION BY MASS SPECTROMETRY</scope>
    <scope>SUBCELLULAR LOCATION [LARGE SCALE ANALYSIS]</scope>
    <source>
        <strain>cv. Columbia</strain>
    </source>
</reference>
<reference key="6">
    <citation type="journal article" date="2013" name="Plant Cell">
        <title>Loss of plastoglobule kinases ABC1K1 and ABC1K3 causes conditional degreening, modified prenyl-lipids, and recruitment of the jasmonic acid pathway.</title>
        <authorList>
            <person name="Lundquist P.K."/>
            <person name="Poliakov A."/>
            <person name="Giacomelli L."/>
            <person name="Friso G."/>
            <person name="Appel M."/>
            <person name="McQuinn R.P."/>
            <person name="Krasnoff S.B."/>
            <person name="Rowland E."/>
            <person name="Ponnala L."/>
            <person name="Sun Q."/>
            <person name="van Wijk K.J."/>
        </authorList>
    </citation>
    <scope>FUNCTION</scope>
    <scope>DISRUPTION PHENOTYPE</scope>
    <scope>INTERACTION WITH ABC1K1</scope>
    <source>
        <strain>cv. Columbia</strain>
    </source>
</reference>
<reference key="7">
    <citation type="journal article" date="2013" name="Plant Physiol.">
        <title>A chloroplast ABC1-like kinase regulates vitamin E metabolism in Arabidopsis.</title>
        <authorList>
            <person name="Martinis J."/>
            <person name="Glauser G."/>
            <person name="Valimareanu S."/>
            <person name="Kessler F."/>
        </authorList>
    </citation>
    <scope>FUNCTION</scope>
    <scope>DISRUPTION PHENOTYPE</scope>
    <scope>CATALYTIC ACTIVITY</scope>
    <source>
        <strain>cv. Columbia</strain>
    </source>
</reference>
<reference key="8">
    <citation type="journal article" date="2015" name="Mol. Plant">
        <title>Arabidopsis atypical kinases ABC1K1 and ABC1K3 act oppositely to cope with photodamage under red light.</title>
        <authorList>
            <person name="Huang H."/>
            <person name="Yang M."/>
            <person name="Su Y."/>
            <person name="Qu L."/>
            <person name="Deng X.W."/>
        </authorList>
    </citation>
    <scope>FUNCTION</scope>
    <scope>DISRUPTION PHENOTYPE</scope>
    <scope>MUTAGENESIS OF ALA-82; GLY-167; ALA-243; ALA-301; PRO-320; GLY-362; GLY-399 AND PRO-405</scope>
    <scope>SUBCELLULAR LOCATION</scope>
    <source>
        <strain>cv. Columbia</strain>
    </source>
</reference>
<reference key="9">
    <citation type="journal article" date="2016" name="Plant Cell">
        <title>The plastoglobule-localized metallopeptidase PGM48 is a positive regulator of senescence in Arabidopsis thaliana.</title>
        <authorList>
            <person name="Bhuiyan N.H."/>
            <person name="Friso G."/>
            <person name="Rowland E."/>
            <person name="Majsec K."/>
            <person name="van Wijk K.J."/>
        </authorList>
    </citation>
    <scope>INTERACTION WITH PGM48</scope>
</reference>
<feature type="transit peptide" description="Chloroplast" evidence="1">
    <location>
        <begin position="1"/>
        <end position="42"/>
    </location>
</feature>
<feature type="chain" id="PRO_0000286522" description="Protein ACTIVITY OF BC1 COMPLEX KINASE 3, chloroplastic">
    <location>
        <begin position="43"/>
        <end position="711"/>
    </location>
</feature>
<feature type="domain" description="Protein kinase" evidence="2">
    <location>
        <begin position="216"/>
        <end position="546"/>
    </location>
</feature>
<feature type="active site" description="Proton acceptor" evidence="2">
    <location>
        <position position="379"/>
    </location>
</feature>
<feature type="binding site" evidence="2">
    <location>
        <begin position="222"/>
        <end position="230"/>
    </location>
    <ligand>
        <name>ATP</name>
        <dbReference type="ChEBI" id="CHEBI:30616"/>
    </ligand>
</feature>
<feature type="binding site" evidence="2">
    <location>
        <position position="245"/>
    </location>
    <ligand>
        <name>ATP</name>
        <dbReference type="ChEBI" id="CHEBI:30616"/>
    </ligand>
</feature>
<feature type="splice variant" id="VSP_025067" description="In isoform 2." evidence="9">
    <location>
        <begin position="1"/>
        <end position="142"/>
    </location>
</feature>
<feature type="mutagenesis site" description="In rbd1-5; suppression of bdr1-1 and bdr1-2 bleaching and dwarf phenotypes." evidence="7">
    <original>A</original>
    <variation>S</variation>
    <location>
        <position position="82"/>
    </location>
</feature>
<feature type="mutagenesis site" description="In rbd1-6; suppression of bdr1-1 and bdr1-2 bleaching and dwarf phenotypes." evidence="7">
    <original>G</original>
    <variation>D</variation>
    <location>
        <position position="167"/>
    </location>
</feature>
<feature type="mutagenesis site" description="In rbd1-8; suppression of bdr1-1 and bdr1-2 bleaching and dwarf phenotypes." evidence="7">
    <original>A</original>
    <variation>T</variation>
    <location>
        <position position="243"/>
    </location>
</feature>
<feature type="mutagenesis site" description="In rbd1-3; suppression of bdr1-1 and bdr1-2 bleaching and dwarf phenotypes." evidence="7">
    <original>A</original>
    <variation>V</variation>
    <location>
        <position position="301"/>
    </location>
</feature>
<feature type="mutagenesis site" description="In rbd1-9; suppression of bdr1-1 and bdr1-2 bleaching and dwarf phenotypes." evidence="7">
    <original>P</original>
    <variation>L</variation>
    <location>
        <position position="320"/>
    </location>
</feature>
<feature type="mutagenesis site" description="In rbd1-11; suppression of bdr1-1 and bdr1-2 bleaching and dwarf phenotypes." evidence="7">
    <original>G</original>
    <variation>E</variation>
    <location>
        <position position="362"/>
    </location>
</feature>
<feature type="mutagenesis site" description="In rbd1-1; suppression of bdr1-1 and bdr1-2 bleaching and dwarf phenotypes." evidence="7">
    <original>G</original>
    <variation>D</variation>
    <location>
        <position position="399"/>
    </location>
</feature>
<feature type="mutagenesis site" description="In rbd1-12; suppression of bdr1-1 and bdr1-2 bleaching and dwarf phenotypes." evidence="7">
    <original>P</original>
    <variation>S</variation>
    <location>
        <position position="405"/>
    </location>
</feature>